<keyword id="KW-0963">Cytoplasm</keyword>
<keyword id="KW-0378">Hydrolase</keyword>
<keyword id="KW-0540">Nuclease</keyword>
<keyword id="KW-1185">Reference proteome</keyword>
<keyword id="KW-0690">Ribosome biogenesis</keyword>
<organism>
    <name type="scientific">Myxococcus xanthus (strain DK1622)</name>
    <dbReference type="NCBI Taxonomy" id="246197"/>
    <lineage>
        <taxon>Bacteria</taxon>
        <taxon>Pseudomonadati</taxon>
        <taxon>Myxococcota</taxon>
        <taxon>Myxococcia</taxon>
        <taxon>Myxococcales</taxon>
        <taxon>Cystobacterineae</taxon>
        <taxon>Myxococcaceae</taxon>
        <taxon>Myxococcus</taxon>
    </lineage>
</organism>
<name>YQGF_MYXXD</name>
<reference key="1">
    <citation type="journal article" date="2006" name="Proc. Natl. Acad. Sci. U.S.A.">
        <title>Evolution of sensory complexity recorded in a myxobacterial genome.</title>
        <authorList>
            <person name="Goldman B.S."/>
            <person name="Nierman W.C."/>
            <person name="Kaiser D."/>
            <person name="Slater S.C."/>
            <person name="Durkin A.S."/>
            <person name="Eisen J.A."/>
            <person name="Ronning C.M."/>
            <person name="Barbazuk W.B."/>
            <person name="Blanchard M."/>
            <person name="Field C."/>
            <person name="Halling C."/>
            <person name="Hinkle G."/>
            <person name="Iartchuk O."/>
            <person name="Kim H.S."/>
            <person name="Mackenzie C."/>
            <person name="Madupu R."/>
            <person name="Miller N."/>
            <person name="Shvartsbeyn A."/>
            <person name="Sullivan S.A."/>
            <person name="Vaudin M."/>
            <person name="Wiegand R."/>
            <person name="Kaplan H.B."/>
        </authorList>
    </citation>
    <scope>NUCLEOTIDE SEQUENCE [LARGE SCALE GENOMIC DNA]</scope>
    <source>
        <strain>DK1622</strain>
    </source>
</reference>
<accession>Q1D063</accession>
<comment type="function">
    <text evidence="1">Could be a nuclease involved in processing of the 5'-end of pre-16S rRNA.</text>
</comment>
<comment type="subcellular location">
    <subcellularLocation>
        <location evidence="1">Cytoplasm</location>
    </subcellularLocation>
</comment>
<comment type="similarity">
    <text evidence="1">Belongs to the YqgF nuclease family.</text>
</comment>
<evidence type="ECO:0000255" key="1">
    <source>
        <dbReference type="HAMAP-Rule" id="MF_00651"/>
    </source>
</evidence>
<feature type="chain" id="PRO_0000257553" description="Putative pre-16S rRNA nuclease">
    <location>
        <begin position="1"/>
        <end position="151"/>
    </location>
</feature>
<gene>
    <name type="ordered locus">MXAN_5823</name>
</gene>
<proteinExistence type="inferred from homology"/>
<dbReference type="EC" id="3.1.-.-" evidence="1"/>
<dbReference type="EMBL" id="CP000113">
    <property type="protein sequence ID" value="ABF87174.1"/>
    <property type="molecule type" value="Genomic_DNA"/>
</dbReference>
<dbReference type="RefSeq" id="WP_011555774.1">
    <property type="nucleotide sequence ID" value="NC_008095.1"/>
</dbReference>
<dbReference type="SMR" id="Q1D063"/>
<dbReference type="STRING" id="246197.MXAN_5823"/>
<dbReference type="EnsemblBacteria" id="ABF87174">
    <property type="protein sequence ID" value="ABF87174"/>
    <property type="gene ID" value="MXAN_5823"/>
</dbReference>
<dbReference type="GeneID" id="41363063"/>
<dbReference type="KEGG" id="mxa:MXAN_5823"/>
<dbReference type="eggNOG" id="COG0816">
    <property type="taxonomic scope" value="Bacteria"/>
</dbReference>
<dbReference type="HOGENOM" id="CLU_098240_2_0_7"/>
<dbReference type="OrthoDB" id="9796140at2"/>
<dbReference type="Proteomes" id="UP000002402">
    <property type="component" value="Chromosome"/>
</dbReference>
<dbReference type="GO" id="GO:0005829">
    <property type="term" value="C:cytosol"/>
    <property type="evidence" value="ECO:0007669"/>
    <property type="project" value="TreeGrafter"/>
</dbReference>
<dbReference type="GO" id="GO:0004518">
    <property type="term" value="F:nuclease activity"/>
    <property type="evidence" value="ECO:0007669"/>
    <property type="project" value="UniProtKB-KW"/>
</dbReference>
<dbReference type="GO" id="GO:0000967">
    <property type="term" value="P:rRNA 5'-end processing"/>
    <property type="evidence" value="ECO:0007669"/>
    <property type="project" value="UniProtKB-UniRule"/>
</dbReference>
<dbReference type="CDD" id="cd16964">
    <property type="entry name" value="YqgF"/>
    <property type="match status" value="1"/>
</dbReference>
<dbReference type="Gene3D" id="3.30.420.140">
    <property type="entry name" value="YqgF/RNase H-like domain"/>
    <property type="match status" value="1"/>
</dbReference>
<dbReference type="HAMAP" id="MF_00651">
    <property type="entry name" value="Nuclease_YqgF"/>
    <property type="match status" value="1"/>
</dbReference>
<dbReference type="InterPro" id="IPR012337">
    <property type="entry name" value="RNaseH-like_sf"/>
</dbReference>
<dbReference type="InterPro" id="IPR005227">
    <property type="entry name" value="YqgF"/>
</dbReference>
<dbReference type="InterPro" id="IPR006641">
    <property type="entry name" value="YqgF/RNaseH-like_dom"/>
</dbReference>
<dbReference type="InterPro" id="IPR037027">
    <property type="entry name" value="YqgF/RNaseH-like_dom_sf"/>
</dbReference>
<dbReference type="NCBIfam" id="TIGR00250">
    <property type="entry name" value="RNAse_H_YqgF"/>
    <property type="match status" value="1"/>
</dbReference>
<dbReference type="PANTHER" id="PTHR33317">
    <property type="entry name" value="POLYNUCLEOTIDYL TRANSFERASE, RIBONUCLEASE H-LIKE SUPERFAMILY PROTEIN"/>
    <property type="match status" value="1"/>
</dbReference>
<dbReference type="PANTHER" id="PTHR33317:SF4">
    <property type="entry name" value="POLYNUCLEOTIDYL TRANSFERASE, RIBONUCLEASE H-LIKE SUPERFAMILY PROTEIN"/>
    <property type="match status" value="1"/>
</dbReference>
<dbReference type="Pfam" id="PF03652">
    <property type="entry name" value="RuvX"/>
    <property type="match status" value="1"/>
</dbReference>
<dbReference type="SMART" id="SM00732">
    <property type="entry name" value="YqgFc"/>
    <property type="match status" value="1"/>
</dbReference>
<dbReference type="SUPFAM" id="SSF53098">
    <property type="entry name" value="Ribonuclease H-like"/>
    <property type="match status" value="1"/>
</dbReference>
<protein>
    <recommendedName>
        <fullName evidence="1">Putative pre-16S rRNA nuclease</fullName>
        <ecNumber evidence="1">3.1.-.-</ecNumber>
    </recommendedName>
</protein>
<sequence length="151" mass="16308">MRTMGLDLGTKTIGVAVSDGLGLTAQGITTVRRTSLKADLAALATVASEHEVTHVVLGLPLNMDGSEGPRAEASRKFADTLAQSLGVTVELWDERLSTVAATRTLLEADVSRARRREVIDQVAAQFILQGWLDAHRPPDTDYHPDDYDSEP</sequence>